<organism>
    <name type="scientific">Chersonesometrus fulvipes</name>
    <name type="common">Indian black scorpion</name>
    <name type="synonym">Heterometrus fulvipes</name>
    <dbReference type="NCBI Taxonomy" id="141248"/>
    <lineage>
        <taxon>Eukaryota</taxon>
        <taxon>Metazoa</taxon>
        <taxon>Ecdysozoa</taxon>
        <taxon>Arthropoda</taxon>
        <taxon>Chelicerata</taxon>
        <taxon>Arachnida</taxon>
        <taxon>Scorpiones</taxon>
        <taxon>Iurida</taxon>
        <taxon>Scorpionoidea</taxon>
        <taxon>Scorpionidae</taxon>
        <taxon>Heterometrinae</taxon>
        <taxon>Chersonesometrus</taxon>
    </lineage>
</organism>
<reference key="1">
    <citation type="journal article" date="2002" name="J. Biol. Chem.">
        <title>Kappa-hefutoxin1, a novel toxin from the scorpion Heterometrus fulvipes with unique structure and function. Importance of the functional diad in potassium channel selectivity.</title>
        <authorList>
            <person name="Srinivasan K.N."/>
            <person name="Sivaraja V."/>
            <person name="Huys I."/>
            <person name="Sasaki T."/>
            <person name="Cheng B."/>
            <person name="Kumar T.K.S."/>
            <person name="Sato K."/>
            <person name="Tytgat J."/>
            <person name="Yu C."/>
            <person name="San B.C.C."/>
            <person name="Ranganathan S."/>
            <person name="Bowie H.J."/>
            <person name="Kini R.M."/>
            <person name="Gopalakrishnakone P."/>
        </authorList>
    </citation>
    <scope>PROTEIN SEQUENCE</scope>
    <scope>FUNCTION</scope>
    <scope>AMIDATION AT CYS-22</scope>
    <scope>STRUCTURE BY NMR OF 1-22</scope>
    <scope>DISULFIDE BONDS</scope>
    <scope>SUBCELLULAR LOCATION</scope>
    <scope>MASS SPECTROMETRY</scope>
    <scope>MUTAGENESIS OF TYR-5 AND LYS-19</scope>
    <scope>SITES TYR-5 AND LYS-19 (FUNCTIONAL DYAD)</scope>
    <source>
        <tissue>Venom</tissue>
    </source>
</reference>
<reference key="2">
    <citation type="journal article" date="2013" name="Toxicon">
        <title>Synthesis and characterization of amino acid deletion analogs of kappa-hefutoxin 1, a scorpion toxin on potassium channels.</title>
        <authorList>
            <person name="Peigneur S."/>
            <person name="Yamaguchi Y."/>
            <person name="Goto H."/>
            <person name="Srinivasan K.N."/>
            <person name="Gopalakrishnakone P."/>
            <person name="Tytgat J."/>
            <person name="Sato K."/>
        </authorList>
    </citation>
    <scope>FUNCTION</scope>
    <scope>SYNTHESIS OF 1-22</scope>
    <scope>MUTAGENESIS OF GLY-1; 1-GLY-HIS-2 AND 1-GLY--ALA-3</scope>
</reference>
<reference key="3">
    <citation type="journal article" date="2017" name="Peptides">
        <title>Expanding the pharmacological profile of kappa-hefutoxin 1 and analogues: A focus on the inhibitory effect on the oncogenic channel Kv10.1.</title>
        <authorList>
            <person name="Moreels L."/>
            <person name="Peigneur S."/>
            <person name="Yamaguchi Y."/>
            <person name="Vriens K."/>
            <person name="Waelkens E."/>
            <person name="Zhu S."/>
            <person name="Thevissen K."/>
            <person name="Cammue B.P.A."/>
            <person name="Sato K."/>
            <person name="Tytgat J."/>
        </authorList>
    </citation>
    <scope>FUNCTION</scope>
    <scope>MUTAGENESIS OF GLY-1 AND 1-GLY-HIS-2</scope>
</reference>
<reference key="4">
    <citation type="journal article" date="2005" name="Biochem. Pharmacol.">
        <title>Assignment of voltage-gated potassium channel blocking activity to kappa-KTx1.3, a non-toxic homologue of kappa-hefutoxin-1, from Heterometrus spinifer venom.</title>
        <authorList>
            <person name="Nirthanan S."/>
            <person name="Pil J."/>
            <person name="Abdel-Mottaleb Y."/>
            <person name="Sugahara Y."/>
            <person name="Gopalakrishnakone P."/>
            <person name="Joseph J.S."/>
            <person name="Sato K."/>
            <person name="Tytgat J."/>
        </authorList>
    </citation>
    <scope>NOMENCLATURE</scope>
</reference>
<reference key="5">
    <citation type="journal article" date="2018" name="Nat. Struct. Mol. Biol.">
        <title>Screening, large-scale production and structure-based classification of cystine-dense peptides.</title>
        <authorList>
            <person name="Correnti C.E."/>
            <person name="Gewe M.M."/>
            <person name="Mehlin C."/>
            <person name="Bandaranayake A.D."/>
            <person name="Johnsen W.A."/>
            <person name="Rupert P.B."/>
            <person name="Brusniak M.Y."/>
            <person name="Clarke M."/>
            <person name="Burke S.E."/>
            <person name="De Van Der Schueren W."/>
            <person name="Pilat K."/>
            <person name="Turnbaugh S.M."/>
            <person name="May D."/>
            <person name="Watson A."/>
            <person name="Chan M.K."/>
            <person name="Bahl C.D."/>
            <person name="Olson J.M."/>
            <person name="Strong R.K."/>
        </authorList>
    </citation>
    <scope>X-RAY CRYSTALLOGRAPHY (1.90 ANGSTROMS) OF 1-22</scope>
    <scope>SYNTHESIS OF 1-22</scope>
    <scope>DISULFIDE BONDS</scope>
</reference>
<sequence>GHACYRNCWREGNDEETCKERCG</sequence>
<comment type="function">
    <molecule>Potassium channel toxin kappa-KTx 1.1</molecule>
    <text evidence="1 2 3">Shows weak blocking activity on voltage-gated potassium channels Kv10.1/KCNH1/EAG1 (IC(50)=26 uM), Kv1.2/KCNA2 (Kd=150 uM), Kv1.3/KCNA3 (Kd=40 uM), Kv1.6/KCNA3 (16.6% inhibition at 40 uM toxin) (PubMed:12034709, PubMed:23726856, PubMed:27578329). The block is dose-dependent, voltage-independent, and reversible (PubMed:12034709). Also shows a weak inhibitory activity on the plant pathogen F.culmorum growth (IC(50)=18.8-37.7 uM) (PubMed:27578329).</text>
</comment>
<comment type="subcellular location">
    <subcellularLocation>
        <location evidence="1">Secreted</location>
    </subcellularLocation>
</comment>
<comment type="tissue specificity">
    <text evidence="7">Expressed by the venom gland.</text>
</comment>
<comment type="domain">
    <text evidence="1">Has the structural arrangement of two alpha-helices stabilized by disulfide bonds (CSalpha/alpha 2(S-S)).</text>
</comment>
<comment type="PTM">
    <text evidence="3">The two disulfide isomers globular (C1-C3, C2-C4) and beads (C1-C2, C3-C4) do not show activity on Kv10.1/KCNH1/EAG1.</text>
</comment>
<comment type="mass spectrometry">
    <molecule>Potassium channel toxin kappa-KTx 1.1</molecule>
</comment>
<comment type="mass spectrometry">
    <molecule>Potassium channel toxin kappa-KTx 1.2</molecule>
</comment>
<comment type="miscellaneous">
    <molecule>Potassium channel toxin kappa-KTx 1.1</molecule>
    <text evidence="1 2">Negative results: has no activity on Kv1.1/KCNA1 (Kd&gt;&gt;150 uM), Kv1.4/KCNA4, Kv1.5/KCNA5, shaker IR, Kv2.1/KCNB1, Kv3.1/KCNC1, Kv4.2/KCND2, and Kv11.1/KCNH2/ERG1 (PubMed:12034709, PubMed:23726856). Is not able to inhibit the growth of C.albicans, S.cerevisiae or F.oxysporum (PubMed:27578329). Kappa-KTx 1.2 has no activity on Kv10.1/KCNH1/EAG1 (PubMed:27578329).</text>
</comment>
<comment type="similarity">
    <text evidence="6">Belongs to the short scorpion toxin superfamily. Potassium channel inhibitor kappa-KTx family. Kappa-KTx 1 subfamily.</text>
</comment>
<dbReference type="PDB" id="1HP9">
    <property type="method" value="NMR"/>
    <property type="chains" value="A=1-22"/>
</dbReference>
<dbReference type="PDB" id="6ATS">
    <property type="method" value="X-ray"/>
    <property type="resolution" value="1.90 A"/>
    <property type="chains" value="A=1-23"/>
</dbReference>
<dbReference type="PDBsum" id="1HP9"/>
<dbReference type="PDBsum" id="6ATS"/>
<dbReference type="SMR" id="P82851"/>
<dbReference type="TCDB" id="8.B.2.1.1">
    <property type="family name" value="the short scorpion toxin (s-st) family"/>
</dbReference>
<dbReference type="GO" id="GO:0005576">
    <property type="term" value="C:extracellular region"/>
    <property type="evidence" value="ECO:0007669"/>
    <property type="project" value="UniProtKB-SubCell"/>
</dbReference>
<dbReference type="GO" id="GO:0015459">
    <property type="term" value="F:potassium channel regulator activity"/>
    <property type="evidence" value="ECO:0007669"/>
    <property type="project" value="UniProtKB-KW"/>
</dbReference>
<dbReference type="GO" id="GO:0090729">
    <property type="term" value="F:toxin activity"/>
    <property type="evidence" value="ECO:0007669"/>
    <property type="project" value="UniProtKB-KW"/>
</dbReference>
<dbReference type="GO" id="GO:0050832">
    <property type="term" value="P:defense response to fungus"/>
    <property type="evidence" value="ECO:0007669"/>
    <property type="project" value="UniProtKB-KW"/>
</dbReference>
<dbReference type="GO" id="GO:0031640">
    <property type="term" value="P:killing of cells of another organism"/>
    <property type="evidence" value="ECO:0007669"/>
    <property type="project" value="UniProtKB-KW"/>
</dbReference>
<dbReference type="InterPro" id="IPR012630">
    <property type="entry name" value="Toxin_25"/>
</dbReference>
<dbReference type="Pfam" id="PF08095">
    <property type="entry name" value="Toxin_25"/>
    <property type="match status" value="1"/>
</dbReference>
<accession>P82851</accession>
<accession>P82850</accession>
<proteinExistence type="evidence at protein level"/>
<evidence type="ECO:0000269" key="1">
    <source>
    </source>
</evidence>
<evidence type="ECO:0000269" key="2">
    <source>
    </source>
</evidence>
<evidence type="ECO:0000269" key="3">
    <source>
    </source>
</evidence>
<evidence type="ECO:0000303" key="4">
    <source>
    </source>
</evidence>
<evidence type="ECO:0000303" key="5">
    <source>
    </source>
</evidence>
<evidence type="ECO:0000305" key="6"/>
<evidence type="ECO:0000305" key="7">
    <source>
    </source>
</evidence>
<evidence type="ECO:0007744" key="8">
    <source>
        <dbReference type="PDB" id="1HP9"/>
    </source>
</evidence>
<evidence type="ECO:0007744" key="9">
    <source>
        <dbReference type="PDB" id="6ATS"/>
    </source>
</evidence>
<evidence type="ECO:0007829" key="10">
    <source>
        <dbReference type="PDB" id="6ATS"/>
    </source>
</evidence>
<name>KKX11_CHEFU</name>
<protein>
    <recommendedName>
        <fullName evidence="5">Potassium channel toxin kappa-KTx 1.2</fullName>
    </recommendedName>
    <alternativeName>
        <fullName evidence="4">Kappa-hefutoxin 2</fullName>
        <shortName evidence="4">Kappa-HfTx2</shortName>
    </alternativeName>
    <component>
        <recommendedName>
            <fullName evidence="5">Potassium channel toxin kappa-KTx 1.1</fullName>
        </recommendedName>
        <alternativeName>
            <fullName evidence="4">Kappa-hefutoxin 1</fullName>
            <shortName evidence="7">Kappa-HfTx1</shortName>
        </alternativeName>
    </component>
</protein>
<keyword id="KW-0002">3D-structure</keyword>
<keyword id="KW-0027">Amidation</keyword>
<keyword id="KW-0929">Antimicrobial</keyword>
<keyword id="KW-0903">Direct protein sequencing</keyword>
<keyword id="KW-1015">Disulfide bond</keyword>
<keyword id="KW-0295">Fungicide</keyword>
<keyword id="KW-0872">Ion channel impairing toxin</keyword>
<keyword id="KW-0528">Neurotoxin</keyword>
<keyword id="KW-0632">Potassium channel impairing toxin</keyword>
<keyword id="KW-0964">Secreted</keyword>
<keyword id="KW-0800">Toxin</keyword>
<keyword id="KW-1220">Voltage-gated potassium channel impairing toxin</keyword>
<feature type="peptide" id="PRO_0000044544" description="Potassium channel toxin kappa-KTx 1.2" evidence="1">
    <location>
        <begin position="1"/>
        <end position="23"/>
    </location>
</feature>
<feature type="peptide" id="PRO_0000446337" description="Potassium channel toxin kappa-KTx 1.1" evidence="1">
    <location>
        <begin position="1"/>
        <end position="22"/>
    </location>
</feature>
<feature type="site" description="Aromatic residue of the functional dyad" evidence="1">
    <location>
        <position position="5"/>
    </location>
</feature>
<feature type="site" description="Basic residue of the functional dyad" evidence="1">
    <location>
        <position position="19"/>
    </location>
</feature>
<feature type="modified residue" description="Cysteine amide" evidence="1">
    <location>
        <position position="22"/>
    </location>
</feature>
<feature type="disulfide bond" evidence="1 8 9">
    <location>
        <begin position="4"/>
        <end position="22"/>
    </location>
</feature>
<feature type="disulfide bond" evidence="1 8 9">
    <location>
        <begin position="8"/>
        <end position="18"/>
    </location>
</feature>
<feature type="mutagenesis site" description="Loss of ability to block Kv1.2/KCNA2, and decrease in ability to block Kv1.3/KCNA3 and Kv1.6/KCNA6." evidence="2">
    <location>
        <begin position="1"/>
        <end position="3"/>
    </location>
</feature>
<feature type="mutagenesis site" description="Loss of ability to block Kv1.2/KCNA2, and decrease in ability to block Kv1.3/KCNA3, Kv1.6/KCNA6, and Kv10.1/KCNH1/EAG1." evidence="2 3">
    <location>
        <begin position="1"/>
        <end position="2"/>
    </location>
</feature>
<feature type="mutagenesis site" description="Loss of ability to block Kv1.2/KCNA2, and decrease in ability to block Kv1.3/KCNA3, Kv1.6/KCNA6, and Kv10.1/KCNH1/EAG1." evidence="2 3">
    <location>
        <position position="1"/>
    </location>
</feature>
<feature type="mutagenesis site" description="Loss of ability to block Kv1.2/KCNA2, Kv1.3/KCNA3, and Kv10.1/KCNH1/EAG1 potassium channels (kappa-Ktx1.1 mutated). Same effect observed; when associated with A-19 (kappa-Ktx1.1 mutated)." evidence="1">
    <original>Y</original>
    <variation>A</variation>
    <location>
        <position position="5"/>
    </location>
</feature>
<feature type="mutagenesis site" description="Loss of ability to block Kv1.2/KCNA2, Kv1.3/KCNA3, and Kv10.1/KCNH1/EAG1 potassium channels (kappa-Ktx1.1 mutated). Same effect observed; when associated with A-5 (kappa-Ktx1.1 mutated)." evidence="1">
    <original>K</original>
    <variation>A</variation>
    <location>
        <position position="19"/>
    </location>
</feature>
<feature type="helix" evidence="10">
    <location>
        <begin position="1"/>
        <end position="10"/>
    </location>
</feature>
<feature type="helix" evidence="10">
    <location>
        <begin position="15"/>
        <end position="21"/>
    </location>
</feature>